<proteinExistence type="evidence at protein level"/>
<accession>P09889</accession>
<reference key="1">
    <citation type="journal article" date="1993" name="J. Biol. Chem.">
        <title>Uteroferrin and intracellular tartrate-resistant acid phosphatases are the products of the same gene.</title>
        <authorList>
            <person name="Ling P."/>
            <person name="Roberts R.M."/>
        </authorList>
    </citation>
    <scope>NUCLEOTIDE SEQUENCE [MRNA]</scope>
    <scope>PARTIAL PROTEIN SEQUENCE</scope>
    <source>
        <tissue>Spleen</tissue>
    </source>
</reference>
<reference key="2">
    <citation type="journal article" date="1989" name="DNA">
        <title>cDNA sequence, gene organization, and progesterone induction of mRNA for uteroferrin, a porcine uterine iron transport protein.</title>
        <authorList>
            <person name="Simmen R.C.M."/>
            <person name="Srinivas V."/>
            <person name="Roberts R.M."/>
        </authorList>
    </citation>
    <scope>NUCLEOTIDE SEQUENCE [GENOMIC DNA / MRNA]</scope>
</reference>
<reference key="3">
    <citation type="journal article" date="2000" name="DNA Cell Biol.">
        <title>Structure of the gene for uteroferrin.</title>
        <authorList>
            <person name="Vallet J.L."/>
            <person name="Fahrenkrug S.C."/>
        </authorList>
    </citation>
    <scope>NUCLEOTIDE SEQUENCE [GENOMIC DNA]</scope>
</reference>
<reference key="4">
    <citation type="journal article" date="1988" name="Mol. Endocrinol.">
        <title>Molecular cloning and temporal expression during pregnancy of the messenger ribonucleic acid encoding uteroferrin, a progesterone-induced uterine secretory protein.</title>
        <authorList>
            <person name="Simmen R.C.M."/>
            <person name="Baumbach G.A."/>
            <person name="Roberts R.M."/>
        </authorList>
    </citation>
    <scope>NUCLEOTIDE SEQUENCE OF 186-215 AND 247-301</scope>
</reference>
<reference key="5">
    <citation type="journal article" date="1995" name="Cytogenet. Cell Genet.">
        <title>Assignment of the uteroferrin gene (ACP5) to swine chromosome 2q12-q21 by fluorescence in situ hybridization.</title>
        <authorList>
            <person name="Yasue H."/>
            <person name="Kusumoto H."/>
            <person name="Mikami H."/>
        </authorList>
    </citation>
    <scope>NUCLEOTIDE SEQUENCE OF 108-195</scope>
</reference>
<reference key="6">
    <citation type="journal article" date="1987" name="Biochem. Biophys. Res. Commun.">
        <title>Sequence homology in the metalloproteins; purple acid phosphatase from beef spleen and uteroferrin from porcine uterus.</title>
        <authorList>
            <person name="Hunt D.F."/>
            <person name="Yates J.R. III"/>
            <person name="Shabanowitz J."/>
            <person name="Zhu N.-Z."/>
            <person name="Zirino T."/>
            <person name="Averill B.A."/>
            <person name="Daurat-Larroque S.T."/>
            <person name="Shewale J.G."/>
            <person name="Roberts R.M."/>
            <person name="Brew K."/>
        </authorList>
    </citation>
    <scope>PARTIAL PROTEIN SEQUENCE</scope>
</reference>
<reference key="7">
    <citation type="journal article" date="1999" name="Structure">
        <title>Crystal structure of mammalian purple acid phosphatase.</title>
        <authorList>
            <person name="Guddat L.W."/>
            <person name="McAlpine A.S."/>
            <person name="Hume D."/>
            <person name="Hamilton S."/>
            <person name="de Jersey J."/>
            <person name="Martin J.L."/>
        </authorList>
    </citation>
    <scope>X-RAY CRYSTALLOGRAPHY (1.55 ANGSTROMS) OF 28-340</scope>
</reference>
<comment type="function">
    <text>Uteroferrin is a phosphoprotein phosphatase, synthesized in response to progesterone. It appears to function in transplacental transport of iron in pig.</text>
</comment>
<comment type="catalytic activity">
    <reaction>
        <text>a phosphate monoester + H2O = an alcohol + phosphate</text>
        <dbReference type="Rhea" id="RHEA:15017"/>
        <dbReference type="ChEBI" id="CHEBI:15377"/>
        <dbReference type="ChEBI" id="CHEBI:30879"/>
        <dbReference type="ChEBI" id="CHEBI:43474"/>
        <dbReference type="ChEBI" id="CHEBI:67140"/>
        <dbReference type="EC" id="3.1.3.2"/>
    </reaction>
</comment>
<comment type="cofactor">
    <cofactor>
        <name>Fe cation</name>
        <dbReference type="ChEBI" id="CHEBI:24875"/>
    </cofactor>
    <text>Binds 2 iron ions per subunit.</text>
</comment>
<comment type="subcellular location">
    <subcellularLocation>
        <location>Secreted</location>
    </subcellularLocation>
</comment>
<gene>
    <name type="primary">ACP5</name>
</gene>
<sequence length="340" mass="38012">MDTWTVLLILQASLVLPGAVGTRTNTRTAPTPILRFVAVGDWGGVPNAPFHTAREMANAKAIATTVKTLGADFILSLGDNFYFTGVHDAKDKRFQETFEDVFSDPSLRNVPWHVLAGNHDHLGNVSAQIAYSKISKRWNFPSPYYRLRFKIPRSNVSVAIFMLDTVTLCGNSDDFVSQQPERPRNLALARTQLAWIKKQLAAAKEDYVLVAGHYPVWSIAEHGPTHCLVKQLLPLLTTHKVTAYLCGHDHNLQYLQDENGLGFVLSGAGNFMDPSKKHLRKVPNGYLRFHFGAENSLGGFAYVEITPKEMSVTYIEASGKSLFKTKLPRRARSEHQHRRA</sequence>
<feature type="signal peptide">
    <location>
        <begin position="1"/>
        <end position="20"/>
    </location>
</feature>
<feature type="chain" id="PRO_0000023984" description="Tartrate-resistant acid phosphatase type 5">
    <location>
        <begin position="21"/>
        <end position="340"/>
    </location>
</feature>
<feature type="binding site">
    <location>
        <position position="41"/>
    </location>
    <ligand>
        <name>Fe cation</name>
        <dbReference type="ChEBI" id="CHEBI:24875"/>
        <label>1</label>
    </ligand>
</feature>
<feature type="binding site">
    <location>
        <position position="79"/>
    </location>
    <ligand>
        <name>Fe cation</name>
        <dbReference type="ChEBI" id="CHEBI:24875"/>
        <label>1</label>
    </ligand>
</feature>
<feature type="binding site">
    <location>
        <position position="79"/>
    </location>
    <ligand>
        <name>Fe cation</name>
        <dbReference type="ChEBI" id="CHEBI:24875"/>
        <label>2</label>
    </ligand>
</feature>
<feature type="binding site">
    <location>
        <position position="82"/>
    </location>
    <ligand>
        <name>Fe cation</name>
        <dbReference type="ChEBI" id="CHEBI:24875"/>
        <label>1</label>
    </ligand>
</feature>
<feature type="binding site">
    <location>
        <position position="118"/>
    </location>
    <ligand>
        <name>Fe cation</name>
        <dbReference type="ChEBI" id="CHEBI:24875"/>
        <label>2</label>
    </ligand>
</feature>
<feature type="binding site">
    <location>
        <position position="213"/>
    </location>
    <ligand>
        <name>Fe cation</name>
        <dbReference type="ChEBI" id="CHEBI:24875"/>
        <label>2</label>
    </ligand>
</feature>
<feature type="binding site">
    <location>
        <position position="248"/>
    </location>
    <ligand>
        <name>Fe cation</name>
        <dbReference type="ChEBI" id="CHEBI:24875"/>
        <label>2</label>
    </ligand>
</feature>
<feature type="binding site">
    <location>
        <position position="250"/>
    </location>
    <ligand>
        <name>Fe cation</name>
        <dbReference type="ChEBI" id="CHEBI:24875"/>
        <label>1</label>
    </ligand>
</feature>
<feature type="glycosylation site" description="N-linked (GlcNAc...) asparagine">
    <location>
        <position position="124"/>
    </location>
</feature>
<feature type="glycosylation site" description="N-linked (GlcNAc...) asparagine" evidence="1">
    <location>
        <position position="155"/>
    </location>
</feature>
<feature type="disulfide bond">
    <location>
        <begin position="169"/>
        <end position="227"/>
    </location>
</feature>
<feature type="sequence conflict" description="In Ref. 2." evidence="2" ref="2">
    <location>
        <begin position="183"/>
        <end position="184"/>
    </location>
</feature>
<feature type="strand" evidence="4">
    <location>
        <begin position="34"/>
        <end position="39"/>
    </location>
</feature>
<feature type="helix" evidence="4">
    <location>
        <begin position="53"/>
        <end position="69"/>
    </location>
</feature>
<feature type="strand" evidence="4">
    <location>
        <begin position="72"/>
        <end position="76"/>
    </location>
</feature>
<feature type="turn" evidence="4">
    <location>
        <begin position="82"/>
        <end position="84"/>
    </location>
</feature>
<feature type="helix" evidence="4">
    <location>
        <begin position="93"/>
        <end position="97"/>
    </location>
</feature>
<feature type="turn" evidence="4">
    <location>
        <begin position="98"/>
        <end position="101"/>
    </location>
</feature>
<feature type="helix" evidence="4">
    <location>
        <begin position="105"/>
        <end position="107"/>
    </location>
</feature>
<feature type="strand" evidence="4">
    <location>
        <begin position="112"/>
        <end position="114"/>
    </location>
</feature>
<feature type="helix" evidence="4">
    <location>
        <begin position="118"/>
        <end position="121"/>
    </location>
</feature>
<feature type="helix" evidence="4">
    <location>
        <begin position="125"/>
        <end position="130"/>
    </location>
</feature>
<feature type="helix" evidence="4">
    <location>
        <begin position="131"/>
        <end position="133"/>
    </location>
</feature>
<feature type="strand" evidence="5">
    <location>
        <begin position="136"/>
        <end position="139"/>
    </location>
</feature>
<feature type="strand" evidence="4">
    <location>
        <begin position="142"/>
        <end position="150"/>
    </location>
</feature>
<feature type="strand" evidence="4">
    <location>
        <begin position="157"/>
        <end position="162"/>
    </location>
</feature>
<feature type="helix" evidence="4">
    <location>
        <begin position="165"/>
        <end position="169"/>
    </location>
</feature>
<feature type="helix" evidence="4">
    <location>
        <begin position="172"/>
        <end position="174"/>
    </location>
</feature>
<feature type="helix" evidence="4">
    <location>
        <begin position="186"/>
        <end position="202"/>
    </location>
</feature>
<feature type="strand" evidence="4">
    <location>
        <begin position="206"/>
        <end position="211"/>
    </location>
</feature>
<feature type="strand" evidence="4">
    <location>
        <begin position="219"/>
        <end position="222"/>
    </location>
</feature>
<feature type="helix" evidence="4">
    <location>
        <begin position="226"/>
        <end position="231"/>
    </location>
</feature>
<feature type="helix" evidence="4">
    <location>
        <begin position="233"/>
        <end position="238"/>
    </location>
</feature>
<feature type="strand" evidence="4">
    <location>
        <begin position="242"/>
        <end position="246"/>
    </location>
</feature>
<feature type="strand" evidence="4">
    <location>
        <begin position="248"/>
        <end position="256"/>
    </location>
</feature>
<feature type="strand" evidence="4">
    <location>
        <begin position="262"/>
        <end position="266"/>
    </location>
</feature>
<feature type="strand" evidence="3">
    <location>
        <begin position="268"/>
        <end position="270"/>
    </location>
</feature>
<feature type="helix" evidence="4">
    <location>
        <begin position="279"/>
        <end position="281"/>
    </location>
</feature>
<feature type="strand" evidence="4">
    <location>
        <begin position="287"/>
        <end position="291"/>
    </location>
</feature>
<feature type="strand" evidence="4">
    <location>
        <begin position="299"/>
        <end position="305"/>
    </location>
</feature>
<feature type="strand" evidence="4">
    <location>
        <begin position="310"/>
        <end position="316"/>
    </location>
</feature>
<feature type="strand" evidence="4">
    <location>
        <begin position="321"/>
        <end position="327"/>
    </location>
</feature>
<dbReference type="EC" id="3.1.3.2"/>
<dbReference type="EMBL" id="M98553">
    <property type="protein sequence ID" value="AAA31129.1"/>
    <property type="molecule type" value="mRNA"/>
</dbReference>
<dbReference type="EMBL" id="M30284">
    <property type="protein sequence ID" value="AAA31139.1"/>
    <property type="molecule type" value="mRNA"/>
</dbReference>
<dbReference type="EMBL" id="M30283">
    <property type="protein sequence ID" value="AAA31138.1"/>
    <property type="molecule type" value="Genomic_DNA"/>
</dbReference>
<dbReference type="EMBL" id="AF292105">
    <property type="protein sequence ID" value="AAG10065.1"/>
    <property type="molecule type" value="Genomic_DNA"/>
</dbReference>
<dbReference type="EMBL" id="M31214">
    <property type="protein sequence ID" value="AAA31134.1"/>
    <property type="molecule type" value="mRNA"/>
</dbReference>
<dbReference type="EMBL" id="M31215">
    <property type="protein sequence ID" value="AAA31135.1"/>
    <property type="molecule type" value="mRNA"/>
</dbReference>
<dbReference type="EMBL" id="S80099">
    <property type="protein sequence ID" value="AAD14321.1"/>
    <property type="molecule type" value="mRNA"/>
</dbReference>
<dbReference type="PIR" id="A46096">
    <property type="entry name" value="A46096"/>
</dbReference>
<dbReference type="RefSeq" id="NP_999374.1">
    <property type="nucleotide sequence ID" value="NM_214209.1"/>
</dbReference>
<dbReference type="RefSeq" id="XP_020936917.1">
    <property type="nucleotide sequence ID" value="XM_021081258.1"/>
</dbReference>
<dbReference type="RefSeq" id="XP_020936921.1">
    <property type="nucleotide sequence ID" value="XM_021081262.1"/>
</dbReference>
<dbReference type="RefSeq" id="XP_020936922.1">
    <property type="nucleotide sequence ID" value="XM_021081263.1"/>
</dbReference>
<dbReference type="PDB" id="1UTE">
    <property type="method" value="X-ray"/>
    <property type="resolution" value="1.55 A"/>
    <property type="chains" value="A=28-340"/>
</dbReference>
<dbReference type="PDB" id="5UQ6">
    <property type="method" value="X-ray"/>
    <property type="resolution" value="1.18 A"/>
    <property type="chains" value="A=28-340"/>
</dbReference>
<dbReference type="PDB" id="7OV2">
    <property type="method" value="X-ray"/>
    <property type="resolution" value="2.10 A"/>
    <property type="chains" value="A=28-340"/>
</dbReference>
<dbReference type="PDB" id="7OV3">
    <property type="method" value="X-ray"/>
    <property type="resolution" value="2.00 A"/>
    <property type="chains" value="A=28-340"/>
</dbReference>
<dbReference type="PDB" id="7OV8">
    <property type="method" value="X-ray"/>
    <property type="resolution" value="2.30 A"/>
    <property type="chains" value="A=1-331"/>
</dbReference>
<dbReference type="PDBsum" id="1UTE"/>
<dbReference type="PDBsum" id="5UQ6"/>
<dbReference type="PDBsum" id="7OV2"/>
<dbReference type="PDBsum" id="7OV3"/>
<dbReference type="PDBsum" id="7OV8"/>
<dbReference type="SMR" id="P09889"/>
<dbReference type="FunCoup" id="P09889">
    <property type="interactions" value="182"/>
</dbReference>
<dbReference type="STRING" id="9823.ENSSSCP00000014466"/>
<dbReference type="BindingDB" id="P09889"/>
<dbReference type="ChEMBL" id="CHEMBL4295708"/>
<dbReference type="GlyCosmos" id="P09889">
    <property type="glycosylation" value="2 sites, No reported glycans"/>
</dbReference>
<dbReference type="GlyGen" id="P09889">
    <property type="glycosylation" value="2 sites"/>
</dbReference>
<dbReference type="PaxDb" id="9823-ENSSSCP00000014466"/>
<dbReference type="PeptideAtlas" id="P09889"/>
<dbReference type="Ensembl" id="ENSSSCT00000014867.5">
    <property type="protein sequence ID" value="ENSSSCP00000014466.5"/>
    <property type="gene ID" value="ENSSSCG00000032282.3"/>
</dbReference>
<dbReference type="Ensembl" id="ENSSSCT00025026575.1">
    <property type="protein sequence ID" value="ENSSSCP00025011265.1"/>
    <property type="gene ID" value="ENSSSCG00025019530.1"/>
</dbReference>
<dbReference type="Ensembl" id="ENSSSCT00050051467.1">
    <property type="protein sequence ID" value="ENSSSCP00050021599.1"/>
    <property type="gene ID" value="ENSSSCG00050038159.1"/>
</dbReference>
<dbReference type="Ensembl" id="ENSSSCT00055058257.1">
    <property type="protein sequence ID" value="ENSSSCP00055046602.1"/>
    <property type="gene ID" value="ENSSSCG00055029348.1"/>
</dbReference>
<dbReference type="Ensembl" id="ENSSSCT00065064276.1">
    <property type="protein sequence ID" value="ENSSSCP00065027841.1"/>
    <property type="gene ID" value="ENSSSCG00065047000.1"/>
</dbReference>
<dbReference type="Ensembl" id="ENSSSCT00070050077.1">
    <property type="protein sequence ID" value="ENSSSCP00070042305.1"/>
    <property type="gene ID" value="ENSSSCG00070025047.1"/>
</dbReference>
<dbReference type="Ensembl" id="ENSSSCT00105077879">
    <property type="protein sequence ID" value="ENSSSCP00105055197"/>
    <property type="gene ID" value="ENSSSCG00105040814"/>
</dbReference>
<dbReference type="Ensembl" id="ENSSSCT00115020988">
    <property type="protein sequence ID" value="ENSSSCP00115019885"/>
    <property type="gene ID" value="ENSSSCG00115012080"/>
</dbReference>
<dbReference type="Ensembl" id="ENSSSCT00130066667">
    <property type="protein sequence ID" value="ENSSSCP00130047873"/>
    <property type="gene ID" value="ENSSSCG00130034065"/>
</dbReference>
<dbReference type="GeneID" id="397414"/>
<dbReference type="KEGG" id="ssc:397414"/>
<dbReference type="CTD" id="54"/>
<dbReference type="VGNC" id="VGNC:85027">
    <property type="gene designation" value="ACP5"/>
</dbReference>
<dbReference type="eggNOG" id="KOG2679">
    <property type="taxonomic scope" value="Eukaryota"/>
</dbReference>
<dbReference type="GeneTree" id="ENSGT00390000016735"/>
<dbReference type="InParanoid" id="P09889"/>
<dbReference type="OMA" id="GFCIHEL"/>
<dbReference type="OrthoDB" id="411211at2759"/>
<dbReference type="BRENDA" id="3.1.3.2">
    <property type="organism ID" value="6170"/>
</dbReference>
<dbReference type="Reactome" id="R-SSC-196843">
    <property type="pathway name" value="Vitamin B2 (riboflavin) metabolism"/>
</dbReference>
<dbReference type="EvolutionaryTrace" id="P09889"/>
<dbReference type="Proteomes" id="UP000008227">
    <property type="component" value="Chromosome 2"/>
</dbReference>
<dbReference type="Proteomes" id="UP000314985">
    <property type="component" value="Chromosome 2"/>
</dbReference>
<dbReference type="Proteomes" id="UP000694570">
    <property type="component" value="Unplaced"/>
</dbReference>
<dbReference type="Proteomes" id="UP000694571">
    <property type="component" value="Unplaced"/>
</dbReference>
<dbReference type="Proteomes" id="UP000694720">
    <property type="component" value="Unplaced"/>
</dbReference>
<dbReference type="Proteomes" id="UP000694722">
    <property type="component" value="Unplaced"/>
</dbReference>
<dbReference type="Proteomes" id="UP000694723">
    <property type="component" value="Unplaced"/>
</dbReference>
<dbReference type="Proteomes" id="UP000694724">
    <property type="component" value="Unplaced"/>
</dbReference>
<dbReference type="Proteomes" id="UP000694725">
    <property type="component" value="Unplaced"/>
</dbReference>
<dbReference type="Proteomes" id="UP000694726">
    <property type="component" value="Unplaced"/>
</dbReference>
<dbReference type="Proteomes" id="UP000694727">
    <property type="component" value="Unplaced"/>
</dbReference>
<dbReference type="Proteomes" id="UP000694728">
    <property type="component" value="Unplaced"/>
</dbReference>
<dbReference type="GO" id="GO:0005576">
    <property type="term" value="C:extracellular region"/>
    <property type="evidence" value="ECO:0007669"/>
    <property type="project" value="UniProtKB-SubCell"/>
</dbReference>
<dbReference type="GO" id="GO:0003993">
    <property type="term" value="F:acid phosphatase activity"/>
    <property type="evidence" value="ECO:0007669"/>
    <property type="project" value="UniProtKB-EC"/>
</dbReference>
<dbReference type="GO" id="GO:0008199">
    <property type="term" value="F:ferric iron binding"/>
    <property type="evidence" value="ECO:0000250"/>
    <property type="project" value="UniProtKB"/>
</dbReference>
<dbReference type="GO" id="GO:0008198">
    <property type="term" value="F:ferrous iron binding"/>
    <property type="evidence" value="ECO:0000250"/>
    <property type="project" value="UniProtKB"/>
</dbReference>
<dbReference type="GO" id="GO:0006826">
    <property type="term" value="P:iron ion transport"/>
    <property type="evidence" value="ECO:0007669"/>
    <property type="project" value="UniProtKB-KW"/>
</dbReference>
<dbReference type="CDD" id="cd07378">
    <property type="entry name" value="MPP_ACP5"/>
    <property type="match status" value="1"/>
</dbReference>
<dbReference type="FunFam" id="3.60.21.10:FF:000033">
    <property type="entry name" value="Tartrate-resistant acid phosphatase type 5"/>
    <property type="match status" value="1"/>
</dbReference>
<dbReference type="Gene3D" id="3.60.21.10">
    <property type="match status" value="1"/>
</dbReference>
<dbReference type="InterPro" id="IPR024927">
    <property type="entry name" value="Acid_PPase"/>
</dbReference>
<dbReference type="InterPro" id="IPR004843">
    <property type="entry name" value="Calcineurin-like_PHP_ApaH"/>
</dbReference>
<dbReference type="InterPro" id="IPR029052">
    <property type="entry name" value="Metallo-depent_PP-like"/>
</dbReference>
<dbReference type="InterPro" id="IPR051558">
    <property type="entry name" value="Metallophosphoesterase_PAP"/>
</dbReference>
<dbReference type="PANTHER" id="PTHR10161">
    <property type="entry name" value="TARTRATE-RESISTANT ACID PHOSPHATASE TYPE 5"/>
    <property type="match status" value="1"/>
</dbReference>
<dbReference type="PANTHER" id="PTHR10161:SF14">
    <property type="entry name" value="TARTRATE-RESISTANT ACID PHOSPHATASE TYPE 5"/>
    <property type="match status" value="1"/>
</dbReference>
<dbReference type="Pfam" id="PF00149">
    <property type="entry name" value="Metallophos"/>
    <property type="match status" value="1"/>
</dbReference>
<dbReference type="PIRSF" id="PIRSF000898">
    <property type="entry name" value="Acid_Ptase_5"/>
    <property type="match status" value="1"/>
</dbReference>
<dbReference type="SUPFAM" id="SSF56300">
    <property type="entry name" value="Metallo-dependent phosphatases"/>
    <property type="match status" value="1"/>
</dbReference>
<keyword id="KW-0002">3D-structure</keyword>
<keyword id="KW-0903">Direct protein sequencing</keyword>
<keyword id="KW-1015">Disulfide bond</keyword>
<keyword id="KW-0325">Glycoprotein</keyword>
<keyword id="KW-0378">Hydrolase</keyword>
<keyword id="KW-0406">Ion transport</keyword>
<keyword id="KW-0408">Iron</keyword>
<keyword id="KW-0410">Iron transport</keyword>
<keyword id="KW-0479">Metal-binding</keyword>
<keyword id="KW-1185">Reference proteome</keyword>
<keyword id="KW-0964">Secreted</keyword>
<keyword id="KW-0732">Signal</keyword>
<keyword id="KW-0813">Transport</keyword>
<protein>
    <recommendedName>
        <fullName>Tartrate-resistant acid phosphatase type 5</fullName>
        <shortName>TR-AP</shortName>
        <ecNumber>3.1.3.2</ecNumber>
    </recommendedName>
    <alternativeName>
        <fullName>Tartrate-resistant acid ATPase</fullName>
        <shortName>TrATPase</shortName>
    </alternativeName>
    <alternativeName>
        <fullName>Type 5 acid phosphatase</fullName>
    </alternativeName>
    <alternativeName>
        <fullName>Uteroferrin</fullName>
        <shortName>UF</shortName>
    </alternativeName>
</protein>
<organism>
    <name type="scientific">Sus scrofa</name>
    <name type="common">Pig</name>
    <dbReference type="NCBI Taxonomy" id="9823"/>
    <lineage>
        <taxon>Eukaryota</taxon>
        <taxon>Metazoa</taxon>
        <taxon>Chordata</taxon>
        <taxon>Craniata</taxon>
        <taxon>Vertebrata</taxon>
        <taxon>Euteleostomi</taxon>
        <taxon>Mammalia</taxon>
        <taxon>Eutheria</taxon>
        <taxon>Laurasiatheria</taxon>
        <taxon>Artiodactyla</taxon>
        <taxon>Suina</taxon>
        <taxon>Suidae</taxon>
        <taxon>Sus</taxon>
    </lineage>
</organism>
<name>PPA5_PIG</name>
<evidence type="ECO:0000255" key="1"/>
<evidence type="ECO:0000305" key="2"/>
<evidence type="ECO:0007829" key="3">
    <source>
        <dbReference type="PDB" id="1UTE"/>
    </source>
</evidence>
<evidence type="ECO:0007829" key="4">
    <source>
        <dbReference type="PDB" id="5UQ6"/>
    </source>
</evidence>
<evidence type="ECO:0007829" key="5">
    <source>
        <dbReference type="PDB" id="7OV2"/>
    </source>
</evidence>